<name>HV692_HUMAN</name>
<comment type="function">
    <text evidence="5 6 7 8">V region of the variable domain of immunoglobulin heavy chains that participates in the antigen recognition (PubMed:24600447). Immunoglobulins, also known as antibodies, are membrane-bound or secreted glycoproteins produced by B lymphocytes. In the recognition phase of humoral immunity, the membrane-bound immunoglobulins serve as receptors which, upon binding of a specific antigen, trigger the clonal expansion and differentiation of B lymphocytes into immunoglobulins-secreting plasma cells. Secreted immunoglobulins mediate the effector phase of humoral immunity, which results in the elimination of bound antigens (PubMed:20176268, PubMed:22158414). The antigen binding site is formed by the variable domain of one heavy chain, together with that of its associated light chain. Thus, each immunoglobulin has two antigen binding sites with remarkable affinity for a particular antigen. The variable domains are assembled by a process called V-(D)-J rearrangement and can then be subjected to somatic hypermutations which, after exposure to antigen and selection, allow affinity maturation for a particular antigen (PubMed:17576170, PubMed:20176268).</text>
</comment>
<comment type="subunit">
    <text evidence="6">Immunoglobulins are composed of two identical heavy chains and two identical light chains; disulfide-linked.</text>
</comment>
<comment type="subcellular location">
    <subcellularLocation>
        <location evidence="6 7">Secreted</location>
    </subcellularLocation>
    <subcellularLocation>
        <location evidence="6 7">Cell membrane</location>
    </subcellularLocation>
</comment>
<comment type="polymorphism">
    <text evidence="10">There are several alleles. The sequence shown is that of IMGT allele IGHV1-69-2*01.</text>
</comment>
<comment type="caution">
    <text evidence="10">For examples of full-length immunoglobulin heavy chains (of different isotypes) see AC P0DOX2, AC P0DOX3, AC P0DOX4, AC P0DOX5 and AC P0DOX6.</text>
</comment>
<protein>
    <recommendedName>
        <fullName evidence="4 9">Immunoglobulin heavy variable 1-69-2</fullName>
    </recommendedName>
</protein>
<sequence length="117" mass="12871">MDCTWRILLLVAAATGTHAEVQLVQSGAEVKKPGATVKISCKVSGYTFTDYYMHWVQQAPGKGLEWMGLVDPEDGETIYAEKFQGRVTITADTSTDTAYMELSSLRSEDTAVYYCAT</sequence>
<feature type="signal peptide" evidence="2">
    <location>
        <begin position="1"/>
        <end position="19"/>
    </location>
</feature>
<feature type="chain" id="PRO_0000439570" description="Immunoglobulin heavy variable 1-69-2" evidence="2">
    <location>
        <begin position="20"/>
        <end position="117"/>
    </location>
</feature>
<feature type="domain" description="Ig-like" evidence="3">
    <location>
        <begin position="20"/>
        <end position="117" status="greater than"/>
    </location>
</feature>
<feature type="region of interest" description="Framework-1" evidence="1">
    <location>
        <begin position="20"/>
        <end position="44"/>
    </location>
</feature>
<feature type="region of interest" description="Complementarity-determining-1" evidence="1">
    <location>
        <begin position="45"/>
        <end position="52"/>
    </location>
</feature>
<feature type="region of interest" description="Framework-2" evidence="1">
    <location>
        <begin position="53"/>
        <end position="69"/>
    </location>
</feature>
<feature type="region of interest" description="Complementarity-determining-2" evidence="1">
    <location>
        <begin position="70"/>
        <end position="77"/>
    </location>
</feature>
<feature type="region of interest" description="Framework-3" evidence="1">
    <location>
        <begin position="78"/>
        <end position="115"/>
    </location>
</feature>
<feature type="region of interest" description="Complementarity-determining-3" evidence="1">
    <location>
        <begin position="116"/>
        <end position="117" status="greater than"/>
    </location>
</feature>
<feature type="disulfide bond" evidence="3">
    <location>
        <begin position="41"/>
        <end position="115"/>
    </location>
</feature>
<feature type="non-terminal residue">
    <location>
        <position position="117"/>
    </location>
</feature>
<evidence type="ECO:0000250" key="1">
    <source>
        <dbReference type="UniProtKB" id="P23083"/>
    </source>
</evidence>
<evidence type="ECO:0000255" key="2"/>
<evidence type="ECO:0000255" key="3">
    <source>
        <dbReference type="PROSITE-ProRule" id="PRU00114"/>
    </source>
</evidence>
<evidence type="ECO:0000303" key="4">
    <source>
    </source>
</evidence>
<evidence type="ECO:0000303" key="5">
    <source>
    </source>
</evidence>
<evidence type="ECO:0000303" key="6">
    <source>
    </source>
</evidence>
<evidence type="ECO:0000303" key="7">
    <source>
    </source>
</evidence>
<evidence type="ECO:0000303" key="8">
    <source>
    </source>
</evidence>
<evidence type="ECO:0000303" key="9">
    <source ref="3"/>
</evidence>
<evidence type="ECO:0000305" key="10"/>
<organism>
    <name type="scientific">Homo sapiens</name>
    <name type="common">Human</name>
    <dbReference type="NCBI Taxonomy" id="9606"/>
    <lineage>
        <taxon>Eukaryota</taxon>
        <taxon>Metazoa</taxon>
        <taxon>Chordata</taxon>
        <taxon>Craniata</taxon>
        <taxon>Vertebrata</taxon>
        <taxon>Euteleostomi</taxon>
        <taxon>Mammalia</taxon>
        <taxon>Eutheria</taxon>
        <taxon>Euarchontoglires</taxon>
        <taxon>Primates</taxon>
        <taxon>Haplorrhini</taxon>
        <taxon>Catarrhini</taxon>
        <taxon>Hominidae</taxon>
        <taxon>Homo</taxon>
    </lineage>
</organism>
<gene>
    <name evidence="4 9" type="primary">IGHV1-69-2</name>
</gene>
<accession>A0A0G2JMI3</accession>
<keyword id="KW-1064">Adaptive immunity</keyword>
<keyword id="KW-1003">Cell membrane</keyword>
<keyword id="KW-1015">Disulfide bond</keyword>
<keyword id="KW-0391">Immunity</keyword>
<keyword id="KW-1280">Immunoglobulin</keyword>
<keyword id="KW-0393">Immunoglobulin domain</keyword>
<keyword id="KW-0472">Membrane</keyword>
<keyword id="KW-1267">Proteomics identification</keyword>
<keyword id="KW-1185">Reference proteome</keyword>
<keyword id="KW-0964">Secreted</keyword>
<keyword id="KW-0732">Signal</keyword>
<reference key="1">
    <citation type="journal article" date="2003" name="Nature">
        <title>The DNA sequence and analysis of human chromosome 14.</title>
        <authorList>
            <person name="Heilig R."/>
            <person name="Eckenberg R."/>
            <person name="Petit J.-L."/>
            <person name="Fonknechten N."/>
            <person name="Da Silva C."/>
            <person name="Cattolico L."/>
            <person name="Levy M."/>
            <person name="Barbe V."/>
            <person name="De Berardinis V."/>
            <person name="Ureta-Vidal A."/>
            <person name="Pelletier E."/>
            <person name="Vico V."/>
            <person name="Anthouard V."/>
            <person name="Rowen L."/>
            <person name="Madan A."/>
            <person name="Qin S."/>
            <person name="Sun H."/>
            <person name="Du H."/>
            <person name="Pepin K."/>
            <person name="Artiguenave F."/>
            <person name="Robert C."/>
            <person name="Cruaud C."/>
            <person name="Bruels T."/>
            <person name="Jaillon O."/>
            <person name="Friedlander L."/>
            <person name="Samson G."/>
            <person name="Brottier P."/>
            <person name="Cure S."/>
            <person name="Segurens B."/>
            <person name="Aniere F."/>
            <person name="Samain S."/>
            <person name="Crespeau H."/>
            <person name="Abbasi N."/>
            <person name="Aiach N."/>
            <person name="Boscus D."/>
            <person name="Dickhoff R."/>
            <person name="Dors M."/>
            <person name="Dubois I."/>
            <person name="Friedman C."/>
            <person name="Gouyvenoux M."/>
            <person name="James R."/>
            <person name="Madan A."/>
            <person name="Mairey-Estrada B."/>
            <person name="Mangenot S."/>
            <person name="Martins N."/>
            <person name="Menard M."/>
            <person name="Oztas S."/>
            <person name="Ratcliffe A."/>
            <person name="Shaffer T."/>
            <person name="Trask B."/>
            <person name="Vacherie B."/>
            <person name="Bellemere C."/>
            <person name="Belser C."/>
            <person name="Besnard-Gonnet M."/>
            <person name="Bartol-Mavel D."/>
            <person name="Boutard M."/>
            <person name="Briez-Silla S."/>
            <person name="Combette S."/>
            <person name="Dufosse-Laurent V."/>
            <person name="Ferron C."/>
            <person name="Lechaplais C."/>
            <person name="Louesse C."/>
            <person name="Muselet D."/>
            <person name="Magdelenat G."/>
            <person name="Pateau E."/>
            <person name="Petit E."/>
            <person name="Sirvain-Trukniewicz P."/>
            <person name="Trybou A."/>
            <person name="Vega-Czarny N."/>
            <person name="Bataille E."/>
            <person name="Bluet E."/>
            <person name="Bordelais I."/>
            <person name="Dubois M."/>
            <person name="Dumont C."/>
            <person name="Guerin T."/>
            <person name="Haffray S."/>
            <person name="Hammadi R."/>
            <person name="Muanga J."/>
            <person name="Pellouin V."/>
            <person name="Robert D."/>
            <person name="Wunderle E."/>
            <person name="Gauguet G."/>
            <person name="Roy A."/>
            <person name="Sainte-Marthe L."/>
            <person name="Verdier J."/>
            <person name="Verdier-Discala C."/>
            <person name="Hillier L.W."/>
            <person name="Fulton L."/>
            <person name="McPherson J."/>
            <person name="Matsuda F."/>
            <person name="Wilson R."/>
            <person name="Scarpelli C."/>
            <person name="Gyapay G."/>
            <person name="Wincker P."/>
            <person name="Saurin W."/>
            <person name="Quetier F."/>
            <person name="Waterston R."/>
            <person name="Hood L."/>
            <person name="Weissenbach J."/>
        </authorList>
    </citation>
    <scope>NUCLEOTIDE SEQUENCE [LARGE SCALE GENOMIC DNA] (IMGT ALLELE IGHV1-69-2*01)</scope>
</reference>
<reference key="2">
    <citation type="journal article" date="2001" name="Exp. Clin. Immunogenet.">
        <title>Nomenclature of the human immunoglobulin heavy (IGH) genes.</title>
        <authorList>
            <person name="Lefranc M.P."/>
        </authorList>
    </citation>
    <scope>NOMENCLATURE</scope>
</reference>
<reference key="3">
    <citation type="book" date="2001" name="The Immunoglobulin FactsBook.">
        <title>The Immunoglobulin FactsBook.</title>
        <editorList>
            <person name="Lefranc M.P."/>
            <person name="Lefranc G."/>
        </editorList>
        <authorList>
            <person name="Lefranc M.P."/>
            <person name="Lefranc G."/>
        </authorList>
    </citation>
    <scope>NOMENCLATURE</scope>
</reference>
<reference key="4">
    <citation type="journal article" date="2007" name="Annu. Rev. Genet.">
        <title>Immunoglobulin somatic hypermutation.</title>
        <authorList>
            <person name="Teng G."/>
            <person name="Papavasiliou F.N."/>
        </authorList>
    </citation>
    <scope>REVIEW ON SOMATIC HYPERMUTATION</scope>
</reference>
<reference key="5">
    <citation type="journal article" date="2010" name="J. Allergy Clin. Immunol.">
        <title>Structure and function of immunoglobulins.</title>
        <authorList>
            <person name="Schroeder H.W. Jr."/>
            <person name="Cavacini L."/>
        </authorList>
    </citation>
    <scope>REVIEW ON IMMUNOGLOBULINS</scope>
</reference>
<reference key="6">
    <citation type="journal article" date="2012" name="Nat. Rev. Immunol.">
        <title>Molecular programming of B cell memory.</title>
        <authorList>
            <person name="McHeyzer-Williams M."/>
            <person name="Okitsu S."/>
            <person name="Wang N."/>
            <person name="McHeyzer-Williams L."/>
        </authorList>
    </citation>
    <scope>REVIEW ON FUNCTION</scope>
</reference>
<reference key="7">
    <citation type="journal article" date="2014" name="Front. Immunol.">
        <title>Immunoglobulin and T Cell Receptor Genes: IMGT((R)) and the Birth and Rise of Immunoinformatics.</title>
        <authorList>
            <person name="Lefranc M.P."/>
        </authorList>
    </citation>
    <scope>NOMENCLATURE</scope>
</reference>
<proteinExistence type="evidence at protein level"/>
<dbReference type="EMBL" id="AC245369">
    <property type="status" value="NOT_ANNOTATED_CDS"/>
    <property type="molecule type" value="Genomic_DNA"/>
</dbReference>
<dbReference type="SMR" id="A0A0G2JMI3"/>
<dbReference type="FunCoup" id="A0A0G2JMI3">
    <property type="interactions" value="289"/>
</dbReference>
<dbReference type="IMGT_GENE-DB" id="IGHV1-69-2"/>
<dbReference type="BioMuta" id="HGNC:5562"/>
<dbReference type="MassIVE" id="A0A0G2JMI3"/>
<dbReference type="Ensembl" id="ENST00000615784.2">
    <property type="protein sequence ID" value="ENSP00000479304.2"/>
    <property type="gene ID" value="ENSG00000275148.2"/>
</dbReference>
<dbReference type="Ensembl" id="ENST00000632209.1">
    <property type="protein sequence ID" value="ENSP00000487714.1"/>
    <property type="gene ID" value="ENSG00000281990.1"/>
</dbReference>
<dbReference type="AGR" id="HGNC:5562"/>
<dbReference type="GeneCards" id="IGHV1-69-2"/>
<dbReference type="HGNC" id="HGNC:5562">
    <property type="gene designation" value="IGHV1-69-2"/>
</dbReference>
<dbReference type="HPA" id="ENSG00000281990">
    <property type="expression patterns" value="Group enriched (gallbladder, intestine, lymphoid tissue, salivary gland, stomach)"/>
</dbReference>
<dbReference type="neXtProt" id="NX_A0A0G2JMI3"/>
<dbReference type="VEuPathDB" id="HostDB:ENSG00000281990"/>
<dbReference type="GeneTree" id="ENSGT00950000183013"/>
<dbReference type="InParanoid" id="A0A0G2JMI3"/>
<dbReference type="OMA" id="DYYLHWV"/>
<dbReference type="PAN-GO" id="A0A0G2JMI3">
    <property type="GO annotations" value="11 GO annotations based on evolutionary models"/>
</dbReference>
<dbReference type="ChiTaRS" id="IGHV1-69-2">
    <property type="organism name" value="human"/>
</dbReference>
<dbReference type="Pharos" id="A0A0G2JMI3">
    <property type="development level" value="Tdark"/>
</dbReference>
<dbReference type="PRO" id="PR:A0A0G2JMI3"/>
<dbReference type="Proteomes" id="UP000005640">
    <property type="component" value="Chromosome 14"/>
</dbReference>
<dbReference type="RNAct" id="A0A0G2JMI3">
    <property type="molecule type" value="protein"/>
</dbReference>
<dbReference type="Bgee" id="ENSG00000281990">
    <property type="expression patterns" value="Expressed in male germ line stem cell (sensu Vertebrata) in testis and 84 other cell types or tissues"/>
</dbReference>
<dbReference type="GO" id="GO:0005576">
    <property type="term" value="C:extracellular region"/>
    <property type="evidence" value="ECO:0007669"/>
    <property type="project" value="UniProtKB-SubCell"/>
</dbReference>
<dbReference type="GO" id="GO:0019814">
    <property type="term" value="C:immunoglobulin complex"/>
    <property type="evidence" value="ECO:0007669"/>
    <property type="project" value="UniProtKB-KW"/>
</dbReference>
<dbReference type="GO" id="GO:0005886">
    <property type="term" value="C:plasma membrane"/>
    <property type="evidence" value="ECO:0007669"/>
    <property type="project" value="UniProtKB-SubCell"/>
</dbReference>
<dbReference type="GO" id="GO:0003823">
    <property type="term" value="F:antigen binding"/>
    <property type="evidence" value="ECO:0000318"/>
    <property type="project" value="GO_Central"/>
</dbReference>
<dbReference type="GO" id="GO:0016064">
    <property type="term" value="P:immunoglobulin mediated immune response"/>
    <property type="evidence" value="ECO:0000318"/>
    <property type="project" value="GO_Central"/>
</dbReference>
<dbReference type="CDD" id="cd04981">
    <property type="entry name" value="IgV_H"/>
    <property type="match status" value="1"/>
</dbReference>
<dbReference type="FunFam" id="2.60.40.10:FF:000556">
    <property type="entry name" value="Immunoglobulin heavy variable 7-81 (non-functional)"/>
    <property type="match status" value="1"/>
</dbReference>
<dbReference type="Gene3D" id="2.60.40.10">
    <property type="entry name" value="Immunoglobulins"/>
    <property type="match status" value="1"/>
</dbReference>
<dbReference type="InterPro" id="IPR007110">
    <property type="entry name" value="Ig-like_dom"/>
</dbReference>
<dbReference type="InterPro" id="IPR036179">
    <property type="entry name" value="Ig-like_dom_sf"/>
</dbReference>
<dbReference type="InterPro" id="IPR013783">
    <property type="entry name" value="Ig-like_fold"/>
</dbReference>
<dbReference type="InterPro" id="IPR013106">
    <property type="entry name" value="Ig_V-set"/>
</dbReference>
<dbReference type="InterPro" id="IPR050199">
    <property type="entry name" value="IgHV"/>
</dbReference>
<dbReference type="PANTHER" id="PTHR23266">
    <property type="entry name" value="IMMUNOGLOBULIN HEAVY CHAIN"/>
    <property type="match status" value="1"/>
</dbReference>
<dbReference type="Pfam" id="PF07686">
    <property type="entry name" value="V-set"/>
    <property type="match status" value="1"/>
</dbReference>
<dbReference type="SMART" id="SM00406">
    <property type="entry name" value="IGv"/>
    <property type="match status" value="1"/>
</dbReference>
<dbReference type="SUPFAM" id="SSF48726">
    <property type="entry name" value="Immunoglobulin"/>
    <property type="match status" value="1"/>
</dbReference>
<dbReference type="PROSITE" id="PS50835">
    <property type="entry name" value="IG_LIKE"/>
    <property type="match status" value="1"/>
</dbReference>